<proteinExistence type="inferred from homology"/>
<gene>
    <name type="primary">fba</name>
    <name type="synonym">fbaA</name>
    <name type="ordered locus">SE_1723</name>
</gene>
<organism>
    <name type="scientific">Staphylococcus epidermidis (strain ATCC 12228 / FDA PCI 1200)</name>
    <dbReference type="NCBI Taxonomy" id="176280"/>
    <lineage>
        <taxon>Bacteria</taxon>
        <taxon>Bacillati</taxon>
        <taxon>Bacillota</taxon>
        <taxon>Bacilli</taxon>
        <taxon>Bacillales</taxon>
        <taxon>Staphylococcaceae</taxon>
        <taxon>Staphylococcus</taxon>
    </lineage>
</organism>
<sequence>MPLVSMKEMLIDAKENGYAVGQYNLNNLEFTQAILEASQEENAPVILGVSEGAARYMSGFYTVVKMVEGLMHDLNITIPVAIHLDHGSSFEKCKEAIDAGFTSVMIDASHSPFEENVEITSKVVEYAHDRGVSVEAELGTVGGQEDDVVADGVIYADPKECQELVEKTGIDTLAPALGSVHGPYKGEPKLGFKEMEEIGASTGLPLVLHGGTGIPTKDIQKAIPYGTAKINVNTENQIASAKAVREVLNNDKDVYDPRKYLGPAREAIKETVKGKIREFGTSNRAK</sequence>
<name>ALF2_STAES</name>
<accession>Q8CNI3</accession>
<evidence type="ECO:0000250" key="1"/>
<evidence type="ECO:0000305" key="2"/>
<reference key="1">
    <citation type="journal article" date="2003" name="Mol. Microbiol.">
        <title>Genome-based analysis of virulence genes in a non-biofilm-forming Staphylococcus epidermidis strain (ATCC 12228).</title>
        <authorList>
            <person name="Zhang Y.-Q."/>
            <person name="Ren S.-X."/>
            <person name="Li H.-L."/>
            <person name="Wang Y.-X."/>
            <person name="Fu G."/>
            <person name="Yang J."/>
            <person name="Qin Z.-Q."/>
            <person name="Miao Y.-G."/>
            <person name="Wang W.-Y."/>
            <person name="Chen R.-S."/>
            <person name="Shen Y."/>
            <person name="Chen Z."/>
            <person name="Yuan Z.-H."/>
            <person name="Zhao G.-P."/>
            <person name="Qu D."/>
            <person name="Danchin A."/>
            <person name="Wen Y.-M."/>
        </authorList>
    </citation>
    <scope>NUCLEOTIDE SEQUENCE [LARGE SCALE GENOMIC DNA]</scope>
    <source>
        <strain>ATCC 12228 / FDA PCI 1200</strain>
    </source>
</reference>
<keyword id="KW-0324">Glycolysis</keyword>
<keyword id="KW-0456">Lyase</keyword>
<keyword id="KW-0479">Metal-binding</keyword>
<keyword id="KW-0862">Zinc</keyword>
<dbReference type="EC" id="4.1.2.13"/>
<dbReference type="EMBL" id="AE015929">
    <property type="protein sequence ID" value="AAO05322.1"/>
    <property type="molecule type" value="Genomic_DNA"/>
</dbReference>
<dbReference type="RefSeq" id="NP_765278.1">
    <property type="nucleotide sequence ID" value="NC_004461.1"/>
</dbReference>
<dbReference type="SMR" id="Q8CNI3"/>
<dbReference type="KEGG" id="sep:SE_1723"/>
<dbReference type="PATRIC" id="fig|176280.10.peg.1683"/>
<dbReference type="eggNOG" id="COG0191">
    <property type="taxonomic scope" value="Bacteria"/>
</dbReference>
<dbReference type="HOGENOM" id="CLU_040088_0_1_9"/>
<dbReference type="OrthoDB" id="9803995at2"/>
<dbReference type="UniPathway" id="UPA00109">
    <property type="reaction ID" value="UER00183"/>
</dbReference>
<dbReference type="Proteomes" id="UP000001411">
    <property type="component" value="Chromosome"/>
</dbReference>
<dbReference type="GO" id="GO:0004332">
    <property type="term" value="F:fructose-bisphosphate aldolase activity"/>
    <property type="evidence" value="ECO:0007669"/>
    <property type="project" value="UniProtKB-EC"/>
</dbReference>
<dbReference type="GO" id="GO:0008270">
    <property type="term" value="F:zinc ion binding"/>
    <property type="evidence" value="ECO:0007669"/>
    <property type="project" value="InterPro"/>
</dbReference>
<dbReference type="GO" id="GO:0030388">
    <property type="term" value="P:fructose 1,6-bisphosphate metabolic process"/>
    <property type="evidence" value="ECO:0007669"/>
    <property type="project" value="InterPro"/>
</dbReference>
<dbReference type="GO" id="GO:0006096">
    <property type="term" value="P:glycolytic process"/>
    <property type="evidence" value="ECO:0007669"/>
    <property type="project" value="UniProtKB-UniPathway"/>
</dbReference>
<dbReference type="CDD" id="cd00947">
    <property type="entry name" value="TBP_aldolase_IIB"/>
    <property type="match status" value="1"/>
</dbReference>
<dbReference type="Gene3D" id="3.20.20.70">
    <property type="entry name" value="Aldolase class I"/>
    <property type="match status" value="1"/>
</dbReference>
<dbReference type="InterPro" id="IPR013785">
    <property type="entry name" value="Aldolase_TIM"/>
</dbReference>
<dbReference type="InterPro" id="IPR050246">
    <property type="entry name" value="Class_II_FBP_aldolase"/>
</dbReference>
<dbReference type="InterPro" id="IPR000771">
    <property type="entry name" value="FBA_II"/>
</dbReference>
<dbReference type="InterPro" id="IPR011289">
    <property type="entry name" value="Fruc_bis_ald_class-2"/>
</dbReference>
<dbReference type="NCBIfam" id="TIGR00167">
    <property type="entry name" value="cbbA"/>
    <property type="match status" value="1"/>
</dbReference>
<dbReference type="NCBIfam" id="TIGR01859">
    <property type="entry name" value="fruc_bis_ald"/>
    <property type="match status" value="1"/>
</dbReference>
<dbReference type="NCBIfam" id="NF006376">
    <property type="entry name" value="PRK08610.1"/>
    <property type="match status" value="1"/>
</dbReference>
<dbReference type="PANTHER" id="PTHR30304">
    <property type="entry name" value="D-TAGATOSE-1,6-BISPHOSPHATE ALDOLASE"/>
    <property type="match status" value="1"/>
</dbReference>
<dbReference type="PANTHER" id="PTHR30304:SF0">
    <property type="entry name" value="D-TAGATOSE-1,6-BISPHOSPHATE ALDOLASE SUBUNIT GATY-RELATED"/>
    <property type="match status" value="1"/>
</dbReference>
<dbReference type="Pfam" id="PF01116">
    <property type="entry name" value="F_bP_aldolase"/>
    <property type="match status" value="1"/>
</dbReference>
<dbReference type="PIRSF" id="PIRSF001359">
    <property type="entry name" value="F_bP_aldolase_II"/>
    <property type="match status" value="1"/>
</dbReference>
<dbReference type="SUPFAM" id="SSF51569">
    <property type="entry name" value="Aldolase"/>
    <property type="match status" value="1"/>
</dbReference>
<dbReference type="PROSITE" id="PS00806">
    <property type="entry name" value="ALDOLASE_CLASS_II_2"/>
    <property type="match status" value="1"/>
</dbReference>
<feature type="chain" id="PRO_0000178741" description="Fructose-bisphosphate aldolase">
    <location>
        <begin position="1"/>
        <end position="286"/>
    </location>
</feature>
<feature type="active site" description="Proton donor" evidence="1">
    <location>
        <position position="85"/>
    </location>
</feature>
<feature type="binding site" evidence="1">
    <location>
        <position position="50"/>
    </location>
    <ligand>
        <name>D-glyceraldehyde 3-phosphate</name>
        <dbReference type="ChEBI" id="CHEBI:59776"/>
    </ligand>
</feature>
<feature type="binding site" evidence="1">
    <location>
        <position position="86"/>
    </location>
    <ligand>
        <name>Zn(2+)</name>
        <dbReference type="ChEBI" id="CHEBI:29105"/>
        <label>1</label>
        <note>catalytic</note>
    </ligand>
</feature>
<feature type="binding site" evidence="1">
    <location>
        <position position="107"/>
    </location>
    <ligand>
        <name>Zn(2+)</name>
        <dbReference type="ChEBI" id="CHEBI:29105"/>
        <label>2</label>
    </ligand>
</feature>
<feature type="binding site" evidence="1">
    <location>
        <position position="137"/>
    </location>
    <ligand>
        <name>Zn(2+)</name>
        <dbReference type="ChEBI" id="CHEBI:29105"/>
        <label>2</label>
    </ligand>
</feature>
<feature type="binding site" evidence="1">
    <location>
        <position position="181"/>
    </location>
    <ligand>
        <name>Zn(2+)</name>
        <dbReference type="ChEBI" id="CHEBI:29105"/>
        <label>1</label>
        <note>catalytic</note>
    </ligand>
</feature>
<feature type="binding site" evidence="1">
    <location>
        <position position="182"/>
    </location>
    <ligand>
        <name>dihydroxyacetone phosphate</name>
        <dbReference type="ChEBI" id="CHEBI:57642"/>
    </ligand>
</feature>
<feature type="binding site" evidence="1">
    <location>
        <position position="209"/>
    </location>
    <ligand>
        <name>Zn(2+)</name>
        <dbReference type="ChEBI" id="CHEBI:29105"/>
        <label>1</label>
        <note>catalytic</note>
    </ligand>
</feature>
<feature type="binding site" evidence="1">
    <location>
        <begin position="210"/>
        <end position="212"/>
    </location>
    <ligand>
        <name>dihydroxyacetone phosphate</name>
        <dbReference type="ChEBI" id="CHEBI:57642"/>
    </ligand>
</feature>
<feature type="binding site" evidence="1">
    <location>
        <begin position="231"/>
        <end position="234"/>
    </location>
    <ligand>
        <name>dihydroxyacetone phosphate</name>
        <dbReference type="ChEBI" id="CHEBI:57642"/>
    </ligand>
</feature>
<comment type="function">
    <text evidence="1">Catalyzes the aldol condensation of dihydroxyacetone phosphate (DHAP or glycerone-phosphate) with glyceraldehyde 3-phosphate (G3P) to form fructose 1,6-bisphosphate (FBP) in gluconeogenesis and the reverse reaction in glycolysis.</text>
</comment>
<comment type="catalytic activity">
    <reaction>
        <text>beta-D-fructose 1,6-bisphosphate = D-glyceraldehyde 3-phosphate + dihydroxyacetone phosphate</text>
        <dbReference type="Rhea" id="RHEA:14729"/>
        <dbReference type="ChEBI" id="CHEBI:32966"/>
        <dbReference type="ChEBI" id="CHEBI:57642"/>
        <dbReference type="ChEBI" id="CHEBI:59776"/>
        <dbReference type="EC" id="4.1.2.13"/>
    </reaction>
</comment>
<comment type="cofactor">
    <cofactor evidence="1">
        <name>Zn(2+)</name>
        <dbReference type="ChEBI" id="CHEBI:29105"/>
    </cofactor>
    <text evidence="1">Binds 2 Zn(2+) ions per subunit. One is catalytic and the other provides a structural contribution.</text>
</comment>
<comment type="pathway">
    <text>Carbohydrate degradation; glycolysis; D-glyceraldehyde 3-phosphate and glycerone phosphate from D-glucose: step 4/4.</text>
</comment>
<comment type="similarity">
    <text evidence="2">Belongs to the class II fructose-bisphosphate aldolase family.</text>
</comment>
<protein>
    <recommendedName>
        <fullName>Fructose-bisphosphate aldolase</fullName>
        <shortName>FBP aldolase</shortName>
        <shortName>FBPA</shortName>
        <ecNumber>4.1.2.13</ecNumber>
    </recommendedName>
    <alternativeName>
        <fullName>Fructose-1,6-bisphosphate aldolase</fullName>
    </alternativeName>
</protein>